<gene>
    <name evidence="4" type="primary">slc2a12</name>
    <name evidence="4" type="synonym">glut12</name>
</gene>
<organism>
    <name type="scientific">Xenopus laevis</name>
    <name type="common">African clawed frog</name>
    <dbReference type="NCBI Taxonomy" id="8355"/>
    <lineage>
        <taxon>Eukaryota</taxon>
        <taxon>Metazoa</taxon>
        <taxon>Chordata</taxon>
        <taxon>Craniata</taxon>
        <taxon>Vertebrata</taxon>
        <taxon>Euteleostomi</taxon>
        <taxon>Amphibia</taxon>
        <taxon>Batrachia</taxon>
        <taxon>Anura</taxon>
        <taxon>Pipoidea</taxon>
        <taxon>Pipidae</taxon>
        <taxon>Xenopodinae</taxon>
        <taxon>Xenopus</taxon>
        <taxon>Xenopus</taxon>
    </lineage>
</organism>
<dbReference type="EMBL" id="BC108638">
    <property type="protein sequence ID" value="AAI08639.1"/>
    <property type="molecule type" value="mRNA"/>
</dbReference>
<dbReference type="RefSeq" id="NP_001089895.1">
    <property type="nucleotide sequence ID" value="NM_001096426.1"/>
</dbReference>
<dbReference type="SMR" id="Q32NG5"/>
<dbReference type="GlyCosmos" id="Q32NG5">
    <property type="glycosylation" value="3 sites, No reported glycans"/>
</dbReference>
<dbReference type="GeneID" id="734962"/>
<dbReference type="KEGG" id="xla:734962"/>
<dbReference type="AGR" id="Xenbase:XB-GENE-1012139"/>
<dbReference type="CTD" id="734962"/>
<dbReference type="Xenbase" id="XB-GENE-1012139">
    <property type="gene designation" value="slc2a12.L"/>
</dbReference>
<dbReference type="OrthoDB" id="4142200at2759"/>
<dbReference type="Proteomes" id="UP000186698">
    <property type="component" value="Chromosome 5L"/>
</dbReference>
<dbReference type="Bgee" id="734962">
    <property type="expression patterns" value="Expressed in zone of skin and 11 other cell types or tissues"/>
</dbReference>
<dbReference type="GO" id="GO:0012505">
    <property type="term" value="C:endomembrane system"/>
    <property type="evidence" value="ECO:0007669"/>
    <property type="project" value="UniProtKB-SubCell"/>
</dbReference>
<dbReference type="GO" id="GO:0016020">
    <property type="term" value="C:membrane"/>
    <property type="evidence" value="ECO:0000318"/>
    <property type="project" value="GO_Central"/>
</dbReference>
<dbReference type="GO" id="GO:0048471">
    <property type="term" value="C:perinuclear region of cytoplasm"/>
    <property type="evidence" value="ECO:0007669"/>
    <property type="project" value="UniProtKB-SubCell"/>
</dbReference>
<dbReference type="GO" id="GO:0005886">
    <property type="term" value="C:plasma membrane"/>
    <property type="evidence" value="ECO:0007669"/>
    <property type="project" value="UniProtKB-SubCell"/>
</dbReference>
<dbReference type="GO" id="GO:0055056">
    <property type="term" value="F:D-glucose transmembrane transporter activity"/>
    <property type="evidence" value="ECO:0000318"/>
    <property type="project" value="GO_Central"/>
</dbReference>
<dbReference type="GO" id="GO:0072359">
    <property type="term" value="P:circulatory system development"/>
    <property type="evidence" value="ECO:0000318"/>
    <property type="project" value="GO_Central"/>
</dbReference>
<dbReference type="GO" id="GO:1904659">
    <property type="term" value="P:D-glucose transmembrane transport"/>
    <property type="evidence" value="ECO:0000318"/>
    <property type="project" value="GO_Central"/>
</dbReference>
<dbReference type="CDD" id="cd17435">
    <property type="entry name" value="MFS_GLUT12_Class3"/>
    <property type="match status" value="1"/>
</dbReference>
<dbReference type="FunFam" id="1.20.1250.20:FF:000237">
    <property type="entry name" value="Solute carrier family 2 (Facilitated glucose transporter), member 12"/>
    <property type="match status" value="1"/>
</dbReference>
<dbReference type="FunFam" id="1.20.1250.20:FF:000124">
    <property type="entry name" value="Solute carrier family 2, facilitated glucose transporter member 12"/>
    <property type="match status" value="1"/>
</dbReference>
<dbReference type="Gene3D" id="1.20.1250.20">
    <property type="entry name" value="MFS general substrate transporter like domains"/>
    <property type="match status" value="2"/>
</dbReference>
<dbReference type="InterPro" id="IPR020846">
    <property type="entry name" value="MFS_dom"/>
</dbReference>
<dbReference type="InterPro" id="IPR005828">
    <property type="entry name" value="MFS_sugar_transport-like"/>
</dbReference>
<dbReference type="InterPro" id="IPR050820">
    <property type="entry name" value="MFS_Sugar_Transporter"/>
</dbReference>
<dbReference type="InterPro" id="IPR036259">
    <property type="entry name" value="MFS_trans_sf"/>
</dbReference>
<dbReference type="InterPro" id="IPR003663">
    <property type="entry name" value="Sugar/inositol_transpt"/>
</dbReference>
<dbReference type="InterPro" id="IPR005829">
    <property type="entry name" value="Sugar_transporter_CS"/>
</dbReference>
<dbReference type="NCBIfam" id="TIGR00879">
    <property type="entry name" value="SP"/>
    <property type="match status" value="1"/>
</dbReference>
<dbReference type="PANTHER" id="PTHR48023">
    <property type="entry name" value="D-XYLOSE-PROTON SYMPORTER-LIKE 2"/>
    <property type="match status" value="1"/>
</dbReference>
<dbReference type="PANTHER" id="PTHR48023:SF2">
    <property type="entry name" value="SOLUTE CARRIER FAMILY 2, FACILITATED GLUCOSE TRANSPORTER MEMBER 12"/>
    <property type="match status" value="1"/>
</dbReference>
<dbReference type="Pfam" id="PF00083">
    <property type="entry name" value="Sugar_tr"/>
    <property type="match status" value="2"/>
</dbReference>
<dbReference type="PRINTS" id="PR00171">
    <property type="entry name" value="SUGRTRNSPORT"/>
</dbReference>
<dbReference type="SUPFAM" id="SSF103473">
    <property type="entry name" value="MFS general substrate transporter"/>
    <property type="match status" value="1"/>
</dbReference>
<dbReference type="PROSITE" id="PS50850">
    <property type="entry name" value="MFS"/>
    <property type="match status" value="1"/>
</dbReference>
<dbReference type="PROSITE" id="PS00216">
    <property type="entry name" value="SUGAR_TRANSPORT_1"/>
    <property type="match status" value="1"/>
</dbReference>
<proteinExistence type="evidence at transcript level"/>
<evidence type="ECO:0000250" key="1">
    <source>
        <dbReference type="UniProtKB" id="Q5J316"/>
    </source>
</evidence>
<evidence type="ECO:0000250" key="2">
    <source>
        <dbReference type="UniProtKB" id="Q6NWF1"/>
    </source>
</evidence>
<evidence type="ECO:0000250" key="3">
    <source>
        <dbReference type="UniProtKB" id="Q8BFW9"/>
    </source>
</evidence>
<evidence type="ECO:0000250" key="4">
    <source>
        <dbReference type="UniProtKB" id="Q8TD20"/>
    </source>
</evidence>
<evidence type="ECO:0000255" key="5"/>
<evidence type="ECO:0000305" key="6"/>
<keyword id="KW-1003">Cell membrane</keyword>
<keyword id="KW-0963">Cytoplasm</keyword>
<keyword id="KW-0325">Glycoprotein</keyword>
<keyword id="KW-0472">Membrane</keyword>
<keyword id="KW-1185">Reference proteome</keyword>
<keyword id="KW-0762">Sugar transport</keyword>
<keyword id="KW-0812">Transmembrane</keyword>
<keyword id="KW-1133">Transmembrane helix</keyword>
<keyword id="KW-0813">Transport</keyword>
<feature type="chain" id="PRO_0000292018" description="Solute carrier family 2, facilitated glucose transporter member 12">
    <location>
        <begin position="1"/>
        <end position="588"/>
    </location>
</feature>
<feature type="topological domain" description="Cytoplasmic" evidence="5">
    <location>
        <begin position="1"/>
        <end position="28"/>
    </location>
</feature>
<feature type="transmembrane region" description="Helical" evidence="5">
    <location>
        <begin position="29"/>
        <end position="49"/>
    </location>
</feature>
<feature type="topological domain" description="Extracellular" evidence="5">
    <location>
        <begin position="50"/>
        <end position="74"/>
    </location>
</feature>
<feature type="transmembrane region" description="Helical" evidence="5">
    <location>
        <begin position="75"/>
        <end position="95"/>
    </location>
</feature>
<feature type="topological domain" description="Cytoplasmic" evidence="5">
    <location>
        <begin position="96"/>
        <end position="103"/>
    </location>
</feature>
<feature type="transmembrane region" description="Helical" evidence="5">
    <location>
        <begin position="104"/>
        <end position="124"/>
    </location>
</feature>
<feature type="topological domain" description="Extracellular" evidence="5">
    <location>
        <begin position="125"/>
        <end position="131"/>
    </location>
</feature>
<feature type="transmembrane region" description="Helical" evidence="5">
    <location>
        <begin position="132"/>
        <end position="152"/>
    </location>
</feature>
<feature type="topological domain" description="Cytoplasmic" evidence="5">
    <location>
        <begin position="153"/>
        <end position="158"/>
    </location>
</feature>
<feature type="transmembrane region" description="Helical" evidence="5">
    <location>
        <begin position="159"/>
        <end position="179"/>
    </location>
</feature>
<feature type="topological domain" description="Extracellular" evidence="5">
    <location>
        <begin position="180"/>
        <end position="191"/>
    </location>
</feature>
<feature type="transmembrane region" description="Helical" evidence="5">
    <location>
        <begin position="192"/>
        <end position="212"/>
    </location>
</feature>
<feature type="topological domain" description="Cytoplasmic" evidence="5">
    <location>
        <begin position="213"/>
        <end position="272"/>
    </location>
</feature>
<feature type="transmembrane region" description="Helical" evidence="5">
    <location>
        <begin position="273"/>
        <end position="293"/>
    </location>
</feature>
<feature type="topological domain" description="Extracellular" evidence="5">
    <location>
        <begin position="294"/>
        <end position="311"/>
    </location>
</feature>
<feature type="transmembrane region" description="Helical" evidence="5">
    <location>
        <begin position="312"/>
        <end position="332"/>
    </location>
</feature>
<feature type="topological domain" description="Cytoplasmic" evidence="5">
    <location>
        <begin position="333"/>
        <end position="339"/>
    </location>
</feature>
<feature type="transmembrane region" description="Helical" evidence="5">
    <location>
        <begin position="340"/>
        <end position="360"/>
    </location>
</feature>
<feature type="topological domain" description="Extracellular" evidence="5">
    <location>
        <begin position="361"/>
        <end position="459"/>
    </location>
</feature>
<feature type="transmembrane region" description="Helical" evidence="5">
    <location>
        <begin position="460"/>
        <end position="480"/>
    </location>
</feature>
<feature type="topological domain" description="Cytoplasmic" evidence="5">
    <location>
        <begin position="481"/>
        <end position="492"/>
    </location>
</feature>
<feature type="transmembrane region" description="Helical" evidence="5">
    <location>
        <begin position="493"/>
        <end position="513"/>
    </location>
</feature>
<feature type="topological domain" description="Extracellular" evidence="5">
    <location>
        <begin position="514"/>
        <end position="522"/>
    </location>
</feature>
<feature type="transmembrane region" description="Helical" evidence="5">
    <location>
        <begin position="523"/>
        <end position="543"/>
    </location>
</feature>
<feature type="topological domain" description="Cytoplasmic" evidence="5">
    <location>
        <begin position="544"/>
        <end position="588"/>
    </location>
</feature>
<feature type="glycosylation site" description="N-linked (GlcNAc...) asparagine" evidence="5">
    <location>
        <position position="377"/>
    </location>
</feature>
<feature type="glycosylation site" description="N-linked (GlcNAc...) asparagine" evidence="5">
    <location>
        <position position="395"/>
    </location>
</feature>
<feature type="glycosylation site" description="N-linked (GlcNAc...) asparagine" evidence="5">
    <location>
        <position position="419"/>
    </location>
</feature>
<sequence length="588" mass="63891">MLAHSTAQDLILQQRSSDDHPQTNPRQTGCGAFIILSSVIAAISGLLVGYELGIISGALLQLQSLLELTCQQQEIVVSALLIGALVASLVGGCLIDLYGRRTTIIFTSILLVFANLLPVVVVSYGSLIAGRIFIGVSISLSAIATCVYIAELSPQDKRGMLVSLNELMIVAGILLAYICNYLFASVNNGWKYMFGLITPLAALQAVAMFFLPRSPRFLIMKGYDDAAGKVLQKLRATTDINEELTAIKSSIKAEYQYKFLDLFCSRDNMRARLLIGLTLSFFVQITGQPNILFYASTVLKSVGFQSTEAASLASTGIGVVKVVSTIPAIFLVDKIGSKTFLCIGSAVMAVSLVSVGLVSLQLDVNYNNICKVHTVQNHSLQDSFVYGPVALAKHNESLFEETGTWLESTKASYHSTSQNGTKLLHVSAPEDSSFGFTVKEPKVKSQSDEIPEYMKWLCLSSLLAFVAAFSIGLGPMAWLVQSEIFPAGIKGRAFAITSSMNWGMNLLISLTFLTLTEMIGLPWMLFGYALMSIASLVFVIMFVPNTKGRPLEEISKELANRSYMCNAVCHRRRSKKKLTPVALIQSPA</sequence>
<name>GTR12_XENLA</name>
<protein>
    <recommendedName>
        <fullName evidence="6">Solute carrier family 2, facilitated glucose transporter member 12</fullName>
    </recommendedName>
    <alternativeName>
        <fullName evidence="4">Glucose transporter type 12</fullName>
        <shortName evidence="4">GLUT-12</shortName>
    </alternativeName>
</protein>
<comment type="function">
    <text evidence="2">Insulin-regulated facilitative glucose transporter.</text>
</comment>
<comment type="catalytic activity">
    <reaction evidence="2">
        <text>D-glucose(out) = D-glucose(in)</text>
        <dbReference type="Rhea" id="RHEA:60376"/>
        <dbReference type="ChEBI" id="CHEBI:4167"/>
    </reaction>
</comment>
<comment type="subcellular location">
    <subcellularLocation>
        <location evidence="3">Cell membrane</location>
        <topology evidence="5">Multi-pass membrane protein</topology>
    </subcellularLocation>
    <subcellularLocation>
        <location evidence="1">Endomembrane system</location>
        <topology evidence="5">Multi-pass membrane protein</topology>
    </subcellularLocation>
    <subcellularLocation>
        <location evidence="4">Cytoplasm</location>
        <location evidence="4">Perinuclear region</location>
    </subcellularLocation>
    <text evidence="4">Localizes primarily perinuclear region in the absence of insulin.</text>
</comment>
<comment type="similarity">
    <text evidence="6">Belongs to the major facilitator superfamily. Sugar transporter (TC 2.A.1.1) family. Glucose transporter subfamily.</text>
</comment>
<reference key="1">
    <citation type="submission" date="2005-11" db="EMBL/GenBank/DDBJ databases">
        <authorList>
            <consortium name="NIH - Xenopus Gene Collection (XGC) project"/>
        </authorList>
    </citation>
    <scope>NUCLEOTIDE SEQUENCE [LARGE SCALE MRNA]</scope>
    <source>
        <tissue>Testis</tissue>
    </source>
</reference>
<accession>Q32NG5</accession>